<reference key="1">
    <citation type="journal article" date="2004" name="Nucleic Acids Res.">
        <title>The genome sequence of Bacillus cereus ATCC 10987 reveals metabolic adaptations and a large plasmid related to Bacillus anthracis pXO1.</title>
        <authorList>
            <person name="Rasko D.A."/>
            <person name="Ravel J."/>
            <person name="Oekstad O.A."/>
            <person name="Helgason E."/>
            <person name="Cer R.Z."/>
            <person name="Jiang L."/>
            <person name="Shores K.A."/>
            <person name="Fouts D.E."/>
            <person name="Tourasse N.J."/>
            <person name="Angiuoli S.V."/>
            <person name="Kolonay J.F."/>
            <person name="Nelson W.C."/>
            <person name="Kolstoe A.-B."/>
            <person name="Fraser C.M."/>
            <person name="Read T.D."/>
        </authorList>
    </citation>
    <scope>NUCLEOTIDE SEQUENCE [LARGE SCALE GENOMIC DNA]</scope>
    <source>
        <strain>ATCC 10987 / NRS 248</strain>
    </source>
</reference>
<gene>
    <name evidence="1" type="primary">nuoH</name>
    <name type="ordered locus">BCE_5421</name>
</gene>
<keyword id="KW-1003">Cell membrane</keyword>
<keyword id="KW-0472">Membrane</keyword>
<keyword id="KW-0520">NAD</keyword>
<keyword id="KW-0874">Quinone</keyword>
<keyword id="KW-1278">Translocase</keyword>
<keyword id="KW-0812">Transmembrane</keyword>
<keyword id="KW-1133">Transmembrane helix</keyword>
<keyword id="KW-0830">Ubiquinone</keyword>
<dbReference type="EC" id="7.1.1.-" evidence="1"/>
<dbReference type="EMBL" id="AE017194">
    <property type="protein sequence ID" value="AAS44321.1"/>
    <property type="molecule type" value="Genomic_DNA"/>
</dbReference>
<dbReference type="SMR" id="Q72XF7"/>
<dbReference type="KEGG" id="bca:BCE_5421"/>
<dbReference type="HOGENOM" id="CLU_015134_0_1_9"/>
<dbReference type="Proteomes" id="UP000002527">
    <property type="component" value="Chromosome"/>
</dbReference>
<dbReference type="GO" id="GO:0005886">
    <property type="term" value="C:plasma membrane"/>
    <property type="evidence" value="ECO:0007669"/>
    <property type="project" value="UniProtKB-SubCell"/>
</dbReference>
<dbReference type="GO" id="GO:0003954">
    <property type="term" value="F:NADH dehydrogenase activity"/>
    <property type="evidence" value="ECO:0007669"/>
    <property type="project" value="TreeGrafter"/>
</dbReference>
<dbReference type="GO" id="GO:0016655">
    <property type="term" value="F:oxidoreductase activity, acting on NAD(P)H, quinone or similar compound as acceptor"/>
    <property type="evidence" value="ECO:0007669"/>
    <property type="project" value="UniProtKB-UniRule"/>
</dbReference>
<dbReference type="GO" id="GO:0048038">
    <property type="term" value="F:quinone binding"/>
    <property type="evidence" value="ECO:0007669"/>
    <property type="project" value="UniProtKB-KW"/>
</dbReference>
<dbReference type="GO" id="GO:0009060">
    <property type="term" value="P:aerobic respiration"/>
    <property type="evidence" value="ECO:0007669"/>
    <property type="project" value="TreeGrafter"/>
</dbReference>
<dbReference type="HAMAP" id="MF_01350">
    <property type="entry name" value="NDH1_NuoH"/>
    <property type="match status" value="1"/>
</dbReference>
<dbReference type="InterPro" id="IPR001694">
    <property type="entry name" value="NADH_UbQ_OxRdtase_su1/FPO"/>
</dbReference>
<dbReference type="InterPro" id="IPR018086">
    <property type="entry name" value="NADH_UbQ_OxRdtase_su1_CS"/>
</dbReference>
<dbReference type="NCBIfam" id="NF004741">
    <property type="entry name" value="PRK06076.1-2"/>
    <property type="match status" value="1"/>
</dbReference>
<dbReference type="PANTHER" id="PTHR11432">
    <property type="entry name" value="NADH DEHYDROGENASE SUBUNIT 1"/>
    <property type="match status" value="1"/>
</dbReference>
<dbReference type="PANTHER" id="PTHR11432:SF3">
    <property type="entry name" value="NADH-UBIQUINONE OXIDOREDUCTASE CHAIN 1"/>
    <property type="match status" value="1"/>
</dbReference>
<dbReference type="Pfam" id="PF00146">
    <property type="entry name" value="NADHdh"/>
    <property type="match status" value="1"/>
</dbReference>
<dbReference type="PROSITE" id="PS00668">
    <property type="entry name" value="COMPLEX1_ND1_2"/>
    <property type="match status" value="1"/>
</dbReference>
<protein>
    <recommendedName>
        <fullName evidence="1">NADH-quinone oxidoreductase subunit H</fullName>
        <ecNumber evidence="1">7.1.1.-</ecNumber>
    </recommendedName>
    <alternativeName>
        <fullName evidence="1">NADH dehydrogenase I subunit H</fullName>
    </alternativeName>
    <alternativeName>
        <fullName evidence="1">NDH-1 subunit H</fullName>
    </alternativeName>
</protein>
<proteinExistence type="inferred from homology"/>
<feature type="chain" id="PRO_0000240055" description="NADH-quinone oxidoreductase subunit H">
    <location>
        <begin position="1"/>
        <end position="333"/>
    </location>
</feature>
<feature type="transmembrane region" description="Helical" evidence="1">
    <location>
        <begin position="15"/>
        <end position="35"/>
    </location>
</feature>
<feature type="transmembrane region" description="Helical" evidence="1">
    <location>
        <begin position="88"/>
        <end position="108"/>
    </location>
</feature>
<feature type="transmembrane region" description="Helical" evidence="1">
    <location>
        <begin position="117"/>
        <end position="137"/>
    </location>
</feature>
<feature type="transmembrane region" description="Helical" evidence="1">
    <location>
        <begin position="159"/>
        <end position="179"/>
    </location>
</feature>
<feature type="transmembrane region" description="Helical" evidence="1">
    <location>
        <begin position="191"/>
        <end position="211"/>
    </location>
</feature>
<feature type="transmembrane region" description="Helical" evidence="1">
    <location>
        <begin position="239"/>
        <end position="259"/>
    </location>
</feature>
<feature type="transmembrane region" description="Helical" evidence="1">
    <location>
        <begin position="274"/>
        <end position="296"/>
    </location>
</feature>
<feature type="transmembrane region" description="Helical" evidence="1">
    <location>
        <begin position="313"/>
        <end position="333"/>
    </location>
</feature>
<organism>
    <name type="scientific">Bacillus cereus (strain ATCC 10987 / NRS 248)</name>
    <dbReference type="NCBI Taxonomy" id="222523"/>
    <lineage>
        <taxon>Bacteria</taxon>
        <taxon>Bacillati</taxon>
        <taxon>Bacillota</taxon>
        <taxon>Bacilli</taxon>
        <taxon>Bacillales</taxon>
        <taxon>Bacillaceae</taxon>
        <taxon>Bacillus</taxon>
        <taxon>Bacillus cereus group</taxon>
    </lineage>
</organism>
<name>NUOH_BACC1</name>
<evidence type="ECO:0000255" key="1">
    <source>
        <dbReference type="HAMAP-Rule" id="MF_01350"/>
    </source>
</evidence>
<comment type="function">
    <text evidence="1">NDH-1 shuttles electrons from NADH, via FMN and iron-sulfur (Fe-S) centers, to quinones in the respiratory chain. The immediate electron acceptor for the enzyme in this species is believed to be ubiquinone. Couples the redox reaction to proton translocation (for every two electrons transferred, four hydrogen ions are translocated across the cytoplasmic membrane), and thus conserves the redox energy in a proton gradient. This subunit may bind ubiquinone.</text>
</comment>
<comment type="catalytic activity">
    <reaction evidence="1">
        <text>a quinone + NADH + 5 H(+)(in) = a quinol + NAD(+) + 4 H(+)(out)</text>
        <dbReference type="Rhea" id="RHEA:57888"/>
        <dbReference type="ChEBI" id="CHEBI:15378"/>
        <dbReference type="ChEBI" id="CHEBI:24646"/>
        <dbReference type="ChEBI" id="CHEBI:57540"/>
        <dbReference type="ChEBI" id="CHEBI:57945"/>
        <dbReference type="ChEBI" id="CHEBI:132124"/>
    </reaction>
</comment>
<comment type="subunit">
    <text evidence="1">NDH-1 is composed of 14 different subunits. Subunits NuoA, H, J, K, L, M, N constitute the membrane sector of the complex.</text>
</comment>
<comment type="subcellular location">
    <subcellularLocation>
        <location evidence="1">Cell membrane</location>
        <topology evidence="1">Multi-pass membrane protein</topology>
    </subcellularLocation>
</comment>
<comment type="similarity">
    <text evidence="1">Belongs to the complex I subunit 1 family.</text>
</comment>
<accession>Q72XF7</accession>
<sequence length="333" mass="36895">MIETLLQSPSSWTNFFIFFGLAVLLLFAVLGFVTYGILAERKVMGFMQGRIGPNQVGGRFGLLQTVADVLKLLLKEDSIPKAADKPLFILAPVIAFAPAFMVLAVIPFTDKFQFADIGVGLLYYIAVSGITTIGVVTGGWASNNKYSLLGGMRAAAQMISYEIPLVMSVIGIVLLAGSLNLNEIVAAQENVWYIFVQPIGFVVFLIAAVAELNRTPFDLPEAESELVSGYHTEYSGFRWAFFMLSEYVYFFGMASLITVLFLGGWNPVMFLGFIPGAVWFALKFSSVVFLLIWFRVTFPRIRGDQLMEFGWKVLLPIALANIFLTALIKELFF</sequence>